<keyword id="KW-0028">Amino-acid biosynthesis</keyword>
<keyword id="KW-0100">Branched-chain amino acid biosynthesis</keyword>
<keyword id="KW-0963">Cytoplasm</keyword>
<keyword id="KW-0432">Leucine biosynthesis</keyword>
<keyword id="KW-0460">Magnesium</keyword>
<keyword id="KW-0479">Metal-binding</keyword>
<keyword id="KW-0808">Transferase</keyword>
<evidence type="ECO:0000255" key="1">
    <source>
        <dbReference type="HAMAP-Rule" id="MF_00572"/>
    </source>
</evidence>
<organism>
    <name type="scientific">Mycobacterium ulcerans (strain Agy99)</name>
    <dbReference type="NCBI Taxonomy" id="362242"/>
    <lineage>
        <taxon>Bacteria</taxon>
        <taxon>Bacillati</taxon>
        <taxon>Actinomycetota</taxon>
        <taxon>Actinomycetes</taxon>
        <taxon>Mycobacteriales</taxon>
        <taxon>Mycobacteriaceae</taxon>
        <taxon>Mycobacterium</taxon>
        <taxon>Mycobacterium ulcerans group</taxon>
    </lineage>
</organism>
<feature type="chain" id="PRO_1000025030" description="2-isopropylmalate synthase">
    <location>
        <begin position="1"/>
        <end position="566"/>
    </location>
</feature>
<feature type="domain" description="Pyruvate carboxyltransferase" evidence="1">
    <location>
        <begin position="32"/>
        <end position="306"/>
    </location>
</feature>
<feature type="region of interest" description="Regulatory domain" evidence="1">
    <location>
        <begin position="451"/>
        <end position="566"/>
    </location>
</feature>
<feature type="binding site" evidence="1">
    <location>
        <position position="41"/>
    </location>
    <ligand>
        <name>Mg(2+)</name>
        <dbReference type="ChEBI" id="CHEBI:18420"/>
    </ligand>
</feature>
<feature type="binding site" evidence="1">
    <location>
        <position position="245"/>
    </location>
    <ligand>
        <name>Mg(2+)</name>
        <dbReference type="ChEBI" id="CHEBI:18420"/>
    </ligand>
</feature>
<feature type="binding site" evidence="1">
    <location>
        <position position="247"/>
    </location>
    <ligand>
        <name>Mg(2+)</name>
        <dbReference type="ChEBI" id="CHEBI:18420"/>
    </ligand>
</feature>
<feature type="binding site" evidence="1">
    <location>
        <position position="281"/>
    </location>
    <ligand>
        <name>Mg(2+)</name>
        <dbReference type="ChEBI" id="CHEBI:18420"/>
    </ligand>
</feature>
<reference key="1">
    <citation type="journal article" date="2007" name="Genome Res.">
        <title>Reductive evolution and niche adaptation inferred from the genome of Mycobacterium ulcerans, the causative agent of Buruli ulcer.</title>
        <authorList>
            <person name="Stinear T.P."/>
            <person name="Seemann T."/>
            <person name="Pidot S."/>
            <person name="Frigui W."/>
            <person name="Reysset G."/>
            <person name="Garnier T."/>
            <person name="Meurice G."/>
            <person name="Simon D."/>
            <person name="Bouchier C."/>
            <person name="Ma L."/>
            <person name="Tichit M."/>
            <person name="Porter J.L."/>
            <person name="Ryan J."/>
            <person name="Johnson P.D.R."/>
            <person name="Davies J.K."/>
            <person name="Jenkin G.A."/>
            <person name="Small P.L.C."/>
            <person name="Jones L.M."/>
            <person name="Tekaia F."/>
            <person name="Laval F."/>
            <person name="Daffe M."/>
            <person name="Parkhill J."/>
            <person name="Cole S.T."/>
        </authorList>
    </citation>
    <scope>NUCLEOTIDE SEQUENCE [LARGE SCALE GENOMIC DNA]</scope>
    <source>
        <strain>Agy99</strain>
    </source>
</reference>
<dbReference type="EC" id="2.3.3.13" evidence="1"/>
<dbReference type="EMBL" id="CP000325">
    <property type="protein sequence ID" value="ABL06315.1"/>
    <property type="molecule type" value="Genomic_DNA"/>
</dbReference>
<dbReference type="SMR" id="A0PVE6"/>
<dbReference type="KEGG" id="mul:MUL_4300"/>
<dbReference type="eggNOG" id="COG0119">
    <property type="taxonomic scope" value="Bacteria"/>
</dbReference>
<dbReference type="HOGENOM" id="CLU_004588_3_2_11"/>
<dbReference type="UniPathway" id="UPA00048">
    <property type="reaction ID" value="UER00070"/>
</dbReference>
<dbReference type="Proteomes" id="UP000000765">
    <property type="component" value="Chromosome"/>
</dbReference>
<dbReference type="GO" id="GO:0005737">
    <property type="term" value="C:cytoplasm"/>
    <property type="evidence" value="ECO:0007669"/>
    <property type="project" value="UniProtKB-SubCell"/>
</dbReference>
<dbReference type="GO" id="GO:0003852">
    <property type="term" value="F:2-isopropylmalate synthase activity"/>
    <property type="evidence" value="ECO:0007669"/>
    <property type="project" value="UniProtKB-UniRule"/>
</dbReference>
<dbReference type="GO" id="GO:0003985">
    <property type="term" value="F:acetyl-CoA C-acetyltransferase activity"/>
    <property type="evidence" value="ECO:0007669"/>
    <property type="project" value="UniProtKB-UniRule"/>
</dbReference>
<dbReference type="GO" id="GO:0000287">
    <property type="term" value="F:magnesium ion binding"/>
    <property type="evidence" value="ECO:0007669"/>
    <property type="project" value="UniProtKB-UniRule"/>
</dbReference>
<dbReference type="GO" id="GO:0009098">
    <property type="term" value="P:L-leucine biosynthetic process"/>
    <property type="evidence" value="ECO:0007669"/>
    <property type="project" value="UniProtKB-UniRule"/>
</dbReference>
<dbReference type="CDD" id="cd07942">
    <property type="entry name" value="DRE_TIM_LeuA"/>
    <property type="match status" value="1"/>
</dbReference>
<dbReference type="FunFam" id="3.20.20.70:FF:000045">
    <property type="entry name" value="2-isopropylmalate synthase"/>
    <property type="match status" value="1"/>
</dbReference>
<dbReference type="FunFam" id="3.30.160.270:FF:000006">
    <property type="entry name" value="2-isopropylmalate synthase"/>
    <property type="match status" value="1"/>
</dbReference>
<dbReference type="Gene3D" id="3.30.160.270">
    <property type="match status" value="1"/>
</dbReference>
<dbReference type="Gene3D" id="3.20.20.70">
    <property type="entry name" value="Aldolase class I"/>
    <property type="match status" value="1"/>
</dbReference>
<dbReference type="HAMAP" id="MF_00572">
    <property type="entry name" value="LeuA_type2"/>
    <property type="match status" value="1"/>
</dbReference>
<dbReference type="InterPro" id="IPR013709">
    <property type="entry name" value="2-isopropylmalate_synth_dimer"/>
</dbReference>
<dbReference type="InterPro" id="IPR002034">
    <property type="entry name" value="AIPM/Hcit_synth_CS"/>
</dbReference>
<dbReference type="InterPro" id="IPR013785">
    <property type="entry name" value="Aldolase_TIM"/>
</dbReference>
<dbReference type="InterPro" id="IPR005668">
    <property type="entry name" value="IPM_Synthase"/>
</dbReference>
<dbReference type="InterPro" id="IPR054692">
    <property type="entry name" value="LeuA-like_post-cat"/>
</dbReference>
<dbReference type="InterPro" id="IPR036230">
    <property type="entry name" value="LeuA_allosteric_dom_sf"/>
</dbReference>
<dbReference type="InterPro" id="IPR039371">
    <property type="entry name" value="LeuA_N_DRE-TIM"/>
</dbReference>
<dbReference type="InterPro" id="IPR000891">
    <property type="entry name" value="PYR_CT"/>
</dbReference>
<dbReference type="NCBIfam" id="TIGR00970">
    <property type="entry name" value="leuA_yeast"/>
    <property type="match status" value="1"/>
</dbReference>
<dbReference type="NCBIfam" id="NF002991">
    <property type="entry name" value="PRK03739.1"/>
    <property type="match status" value="1"/>
</dbReference>
<dbReference type="PANTHER" id="PTHR46911">
    <property type="match status" value="1"/>
</dbReference>
<dbReference type="PANTHER" id="PTHR46911:SF1">
    <property type="entry name" value="2-ISOPROPYLMALATE SYNTHASE"/>
    <property type="match status" value="1"/>
</dbReference>
<dbReference type="Pfam" id="PF00682">
    <property type="entry name" value="HMGL-like"/>
    <property type="match status" value="1"/>
</dbReference>
<dbReference type="Pfam" id="PF22615">
    <property type="entry name" value="IPMS_D2"/>
    <property type="match status" value="1"/>
</dbReference>
<dbReference type="Pfam" id="PF08502">
    <property type="entry name" value="LeuA_dimer"/>
    <property type="match status" value="1"/>
</dbReference>
<dbReference type="SMART" id="SM00917">
    <property type="entry name" value="LeuA_dimer"/>
    <property type="match status" value="1"/>
</dbReference>
<dbReference type="SUPFAM" id="SSF110921">
    <property type="entry name" value="2-isopropylmalate synthase LeuA, allosteric (dimerisation) domain"/>
    <property type="match status" value="1"/>
</dbReference>
<dbReference type="SUPFAM" id="SSF51569">
    <property type="entry name" value="Aldolase"/>
    <property type="match status" value="1"/>
</dbReference>
<dbReference type="SUPFAM" id="SSF89000">
    <property type="entry name" value="post-HMGL domain-like"/>
    <property type="match status" value="1"/>
</dbReference>
<dbReference type="PROSITE" id="PS00815">
    <property type="entry name" value="AIPM_HOMOCIT_SYNTH_1"/>
    <property type="match status" value="1"/>
</dbReference>
<dbReference type="PROSITE" id="PS00816">
    <property type="entry name" value="AIPM_HOMOCIT_SYNTH_2"/>
    <property type="match status" value="1"/>
</dbReference>
<dbReference type="PROSITE" id="PS50991">
    <property type="entry name" value="PYR_CT"/>
    <property type="match status" value="1"/>
</dbReference>
<gene>
    <name evidence="1" type="primary">leuA</name>
    <name type="ordered locus">MUL_4300</name>
</gene>
<comment type="function">
    <text evidence="1">Catalyzes the condensation of the acetyl group of acetyl-CoA with 3-methyl-2-oxobutanoate (2-ketoisovalerate) to form 3-carboxy-3-hydroxy-4-methylpentanoate (2-isopropylmalate).</text>
</comment>
<comment type="catalytic activity">
    <reaction evidence="1">
        <text>3-methyl-2-oxobutanoate + acetyl-CoA + H2O = (2S)-2-isopropylmalate + CoA + H(+)</text>
        <dbReference type="Rhea" id="RHEA:21524"/>
        <dbReference type="ChEBI" id="CHEBI:1178"/>
        <dbReference type="ChEBI" id="CHEBI:11851"/>
        <dbReference type="ChEBI" id="CHEBI:15377"/>
        <dbReference type="ChEBI" id="CHEBI:15378"/>
        <dbReference type="ChEBI" id="CHEBI:57287"/>
        <dbReference type="ChEBI" id="CHEBI:57288"/>
        <dbReference type="EC" id="2.3.3.13"/>
    </reaction>
</comment>
<comment type="cofactor">
    <cofactor evidence="1">
        <name>Mg(2+)</name>
        <dbReference type="ChEBI" id="CHEBI:18420"/>
    </cofactor>
</comment>
<comment type="pathway">
    <text evidence="1">Amino-acid biosynthesis; L-leucine biosynthesis; L-leucine from 3-methyl-2-oxobutanoate: step 1/4.</text>
</comment>
<comment type="subunit">
    <text evidence="1">Homodimer.</text>
</comment>
<comment type="subcellular location">
    <subcellularLocation>
        <location evidence="1">Cytoplasm</location>
    </subcellularLocation>
</comment>
<comment type="similarity">
    <text evidence="1">Belongs to the alpha-IPM synthase/homocitrate synthase family. LeuA type 2 subfamily.</text>
</comment>
<name>LEU1_MYCUA</name>
<accession>A0PVE6</accession>
<sequence length="566" mass="61945">MPVNRYRPFAEEVEHIRVTDRTWPDRVIDRAPLWCAVDLRDGNQALIDPMSPARKRRMFDLLVRMGYKEIEVGFPSASQTDFDFVREIITEGAIPDDVTIQVLTQCRPELIERTFEACAGASKVIVHFYNSTSILQRRVVFRADRAAVEAIATDGARRCVEEAAKYPDTQWRFEYSPESYTGTELEYAKQVCDAVAEVIQPTPENPIIFNLPATVEMATPNVYADSIEWMSRNLANRESVILSLHPHNDRGTAVAAAELGFAAGADRIEGCLFGNGERTGNVCLATLGLNLFSRGVDPQIDFSNIDEIRRTVEYCNQLPVPERHPYGGDLVYTAFSGSHQDAINKGLDAMEFDADAADSDMDDMLWQVPYLPIDPKDVGRTYEAVIRVNSQSGKGGVAYIMKADHGLALPRRLQIEFSRAIQEIAEGSAGEGGEVSPKEMWDAFAEEYLAPVRPLERIKQRVIAAEEDGGTTSIDATVKIDGKEAEISGSGNGPLAAFVHALGTVGFDVAVLDYSEHAMSAGDDAQAAAYVEASVAGKTVWGVGIAPSITTASLRAVVSAINRASR</sequence>
<protein>
    <recommendedName>
        <fullName evidence="1">2-isopropylmalate synthase</fullName>
        <ecNumber evidence="1">2.3.3.13</ecNumber>
    </recommendedName>
    <alternativeName>
        <fullName evidence="1">Alpha-IPM synthase</fullName>
    </alternativeName>
    <alternativeName>
        <fullName evidence="1">Alpha-isopropylmalate synthase</fullName>
    </alternativeName>
</protein>
<proteinExistence type="inferred from homology"/>